<accession>P0C948</accession>
<sequence>MIQTITHIMIISSLIIFGIALIICLFRLIKGPTTADRVVTFDTTSAVVMSIVGVLSVLMGTVSFLDSIMLIAIISFVSSVSISRFIGGGHVFNGNNKRNL</sequence>
<organism>
    <name type="scientific">Staphylococcus aureus (strain NCTC 8325 / PS 47)</name>
    <dbReference type="NCBI Taxonomy" id="93061"/>
    <lineage>
        <taxon>Bacteria</taxon>
        <taxon>Bacillati</taxon>
        <taxon>Bacillota</taxon>
        <taxon>Bacilli</taxon>
        <taxon>Bacillales</taxon>
        <taxon>Staphylococcaceae</taxon>
        <taxon>Staphylococcus</taxon>
    </lineage>
</organism>
<proteinExistence type="inferred from homology"/>
<protein>
    <recommendedName>
        <fullName>Putative antiporter subunit mnhF2</fullName>
    </recommendedName>
    <alternativeName>
        <fullName>Mrp complex subunit F2</fullName>
    </alternativeName>
    <alternativeName>
        <fullName>Putative NADH-ubiquinone oxidoreductase subunit mnhF2</fullName>
    </alternativeName>
</protein>
<dbReference type="EMBL" id="CP000253">
    <property type="status" value="NOT_ANNOTATED_CDS"/>
    <property type="molecule type" value="Genomic_DNA"/>
</dbReference>
<dbReference type="RefSeq" id="WP_000616642.1">
    <property type="nucleotide sequence ID" value="NZ_LS483365.1"/>
</dbReference>
<dbReference type="SMR" id="P0C948"/>
<dbReference type="PaxDb" id="1280-SAXN108_0694"/>
<dbReference type="eggNOG" id="COG2212">
    <property type="taxonomic scope" value="Bacteria"/>
</dbReference>
<dbReference type="Proteomes" id="UP000008816">
    <property type="component" value="Chromosome"/>
</dbReference>
<dbReference type="GO" id="GO:0005886">
    <property type="term" value="C:plasma membrane"/>
    <property type="evidence" value="ECO:0007669"/>
    <property type="project" value="UniProtKB-SubCell"/>
</dbReference>
<dbReference type="GO" id="GO:0015385">
    <property type="term" value="F:sodium:proton antiporter activity"/>
    <property type="evidence" value="ECO:0000318"/>
    <property type="project" value="GO_Central"/>
</dbReference>
<dbReference type="InterPro" id="IPR007208">
    <property type="entry name" value="MrpF/PhaF-like"/>
</dbReference>
<dbReference type="NCBIfam" id="NF009300">
    <property type="entry name" value="PRK12657.1"/>
    <property type="match status" value="1"/>
</dbReference>
<dbReference type="PANTHER" id="PTHR34702">
    <property type="entry name" value="NA(+)/H(+) ANTIPORTER SUBUNIT F1"/>
    <property type="match status" value="1"/>
</dbReference>
<dbReference type="PANTHER" id="PTHR34702:SF1">
    <property type="entry name" value="NA(+)_H(+) ANTIPORTER SUBUNIT F"/>
    <property type="match status" value="1"/>
</dbReference>
<dbReference type="Pfam" id="PF04066">
    <property type="entry name" value="MrpF_PhaF"/>
    <property type="match status" value="1"/>
</dbReference>
<dbReference type="PIRSF" id="PIRSF028784">
    <property type="entry name" value="MrpF"/>
    <property type="match status" value="1"/>
</dbReference>
<reference key="1">
    <citation type="book" date="2006" name="Gram positive pathogens, 2nd edition">
        <title>The Staphylococcus aureus NCTC 8325 genome.</title>
        <editorList>
            <person name="Fischetti V."/>
            <person name="Novick R."/>
            <person name="Ferretti J."/>
            <person name="Portnoy D."/>
            <person name="Rood J."/>
        </editorList>
        <authorList>
            <person name="Gillaspy A.F."/>
            <person name="Worrell V."/>
            <person name="Orvis J."/>
            <person name="Roe B.A."/>
            <person name="Dyer D.W."/>
            <person name="Iandolo J.J."/>
        </authorList>
    </citation>
    <scope>NUCLEOTIDE SEQUENCE [LARGE SCALE GENOMIC DNA]</scope>
    <source>
        <strain>NCTC 8325 / PS 47</strain>
    </source>
</reference>
<reference key="2">
    <citation type="unpublished observations" date="2008-07">
        <authorList>
            <person name="Ossandon F.J."/>
            <person name="Rivera G."/>
            <person name="Holmes D.S."/>
        </authorList>
    </citation>
    <scope>IDENTIFICATION</scope>
</reference>
<comment type="subunit">
    <text evidence="1">May form a heterooligomeric complex that consists of seven subunits: mnhA2, mnhB2, mnhC2, mnhD2, mnhE2, mnhF2 and mnhG2.</text>
</comment>
<comment type="subcellular location">
    <subcellularLocation>
        <location evidence="3">Cell membrane</location>
        <topology evidence="3">Multi-pass membrane protein</topology>
    </subcellularLocation>
</comment>
<comment type="similarity">
    <text evidence="3">Belongs to the CPA3 antiporters (TC 2.A.63) subunit F family.</text>
</comment>
<keyword id="KW-0050">Antiport</keyword>
<keyword id="KW-1003">Cell membrane</keyword>
<keyword id="KW-0406">Ion transport</keyword>
<keyword id="KW-0472">Membrane</keyword>
<keyword id="KW-1185">Reference proteome</keyword>
<keyword id="KW-0812">Transmembrane</keyword>
<keyword id="KW-1133">Transmembrane helix</keyword>
<keyword id="KW-0813">Transport</keyword>
<feature type="chain" id="PRO_0000372201" description="Putative antiporter subunit mnhF2">
    <location>
        <begin position="1"/>
        <end position="100"/>
    </location>
</feature>
<feature type="transmembrane region" description="Helical" evidence="2">
    <location>
        <begin position="5"/>
        <end position="25"/>
    </location>
</feature>
<feature type="transmembrane region" description="Helical" evidence="2">
    <location>
        <begin position="38"/>
        <end position="60"/>
    </location>
</feature>
<feature type="transmembrane region" description="Helical" evidence="2">
    <location>
        <begin position="70"/>
        <end position="92"/>
    </location>
</feature>
<gene>
    <name type="primary">mnhF2</name>
    <name type="synonym">mrpF2</name>
    <name type="ordered locus">SAOUHSC_00630.1</name>
</gene>
<name>MNHF2_STAA8</name>
<evidence type="ECO:0000250" key="1"/>
<evidence type="ECO:0000255" key="2"/>
<evidence type="ECO:0000305" key="3"/>